<gene>
    <name evidence="1" type="primary">argE</name>
    <name type="ordered locus">SFV_4026</name>
</gene>
<accession>Q0SY37</accession>
<feature type="chain" id="PRO_1000065063" description="Acetylornithine deacetylase">
    <location>
        <begin position="1"/>
        <end position="383"/>
    </location>
</feature>
<feature type="active site" evidence="1">
    <location>
        <position position="82"/>
    </location>
</feature>
<feature type="active site" evidence="1">
    <location>
        <position position="144"/>
    </location>
</feature>
<feature type="binding site" evidence="1">
    <location>
        <position position="80"/>
    </location>
    <ligand>
        <name>Zn(2+)</name>
        <dbReference type="ChEBI" id="CHEBI:29105"/>
        <label>1</label>
    </ligand>
</feature>
<feature type="binding site" evidence="1">
    <location>
        <position position="112"/>
    </location>
    <ligand>
        <name>Zn(2+)</name>
        <dbReference type="ChEBI" id="CHEBI:29105"/>
        <label>1</label>
    </ligand>
</feature>
<feature type="binding site" evidence="1">
    <location>
        <position position="112"/>
    </location>
    <ligand>
        <name>Zn(2+)</name>
        <dbReference type="ChEBI" id="CHEBI:29105"/>
        <label>2</label>
    </ligand>
</feature>
<feature type="binding site" evidence="1">
    <location>
        <position position="145"/>
    </location>
    <ligand>
        <name>Zn(2+)</name>
        <dbReference type="ChEBI" id="CHEBI:29105"/>
        <label>2</label>
    </ligand>
</feature>
<feature type="binding site" evidence="1">
    <location>
        <position position="169"/>
    </location>
    <ligand>
        <name>Zn(2+)</name>
        <dbReference type="ChEBI" id="CHEBI:29105"/>
        <label>1</label>
    </ligand>
</feature>
<feature type="binding site" evidence="1">
    <location>
        <position position="355"/>
    </location>
    <ligand>
        <name>Zn(2+)</name>
        <dbReference type="ChEBI" id="CHEBI:29105"/>
        <label>2</label>
    </ligand>
</feature>
<sequence length="383" mass="42424">MKNKLPPFIEIYRALIATPSISATEEALDQSNADLITLLADWFKDLGFNVEVQPVPGTRNKFNMLASYGQGAGGLLLAGHTDTVPFDDGRWTRDPFTLTEHDGKLYGLGTADMKGFFAFILDALRDVDVTKLKKPLYILATADEETSMAGARYFAETTALRPDCAIIGEPTSLQPVRAHKGHISNAIRIQGQSGHSSDPARGVNAIELMHDAIGHILQLRDNLKERYHYEAFTVPYPTLNLGHIHGGDASNRICACCELHMDIRPQPGMTLNELNGLLNDALAPVSERWPGRLTVDELHPPIPGYECPPNHQLVEVVEKLLGAKTEVVNYCTEAPFIQTLCPTLVLGPGSINQAHQPDEYLETRFIKPTRELIIQVIHHFCWH</sequence>
<dbReference type="EC" id="3.5.1.16" evidence="1"/>
<dbReference type="EMBL" id="CP000266">
    <property type="protein sequence ID" value="ABF06028.1"/>
    <property type="molecule type" value="Genomic_DNA"/>
</dbReference>
<dbReference type="RefSeq" id="WP_005071452.1">
    <property type="nucleotide sequence ID" value="NC_008258.1"/>
</dbReference>
<dbReference type="SMR" id="Q0SY37"/>
<dbReference type="MEROPS" id="M20.974"/>
<dbReference type="KEGG" id="sfv:SFV_4026"/>
<dbReference type="HOGENOM" id="CLU_021802_2_4_6"/>
<dbReference type="UniPathway" id="UPA00068">
    <property type="reaction ID" value="UER00110"/>
</dbReference>
<dbReference type="Proteomes" id="UP000000659">
    <property type="component" value="Chromosome"/>
</dbReference>
<dbReference type="GO" id="GO:0005737">
    <property type="term" value="C:cytoplasm"/>
    <property type="evidence" value="ECO:0007669"/>
    <property type="project" value="UniProtKB-SubCell"/>
</dbReference>
<dbReference type="GO" id="GO:0008777">
    <property type="term" value="F:acetylornithine deacetylase activity"/>
    <property type="evidence" value="ECO:0007669"/>
    <property type="project" value="UniProtKB-UniRule"/>
</dbReference>
<dbReference type="GO" id="GO:0008270">
    <property type="term" value="F:zinc ion binding"/>
    <property type="evidence" value="ECO:0007669"/>
    <property type="project" value="UniProtKB-UniRule"/>
</dbReference>
<dbReference type="GO" id="GO:0006526">
    <property type="term" value="P:L-arginine biosynthetic process"/>
    <property type="evidence" value="ECO:0007669"/>
    <property type="project" value="UniProtKB-UniRule"/>
</dbReference>
<dbReference type="CDD" id="cd03894">
    <property type="entry name" value="M20_ArgE"/>
    <property type="match status" value="1"/>
</dbReference>
<dbReference type="FunFam" id="3.30.70.360:FF:000003">
    <property type="entry name" value="Acetylornithine deacetylase"/>
    <property type="match status" value="1"/>
</dbReference>
<dbReference type="Gene3D" id="3.30.70.360">
    <property type="match status" value="1"/>
</dbReference>
<dbReference type="Gene3D" id="3.40.630.10">
    <property type="entry name" value="Zn peptidases"/>
    <property type="match status" value="1"/>
</dbReference>
<dbReference type="HAMAP" id="MF_01108">
    <property type="entry name" value="ArgE"/>
    <property type="match status" value="1"/>
</dbReference>
<dbReference type="InterPro" id="IPR010169">
    <property type="entry name" value="AcOrn-deacetyl"/>
</dbReference>
<dbReference type="InterPro" id="IPR001261">
    <property type="entry name" value="ArgE/DapE_CS"/>
</dbReference>
<dbReference type="InterPro" id="IPR036264">
    <property type="entry name" value="Bact_exopeptidase_dim_dom"/>
</dbReference>
<dbReference type="InterPro" id="IPR002933">
    <property type="entry name" value="Peptidase_M20"/>
</dbReference>
<dbReference type="InterPro" id="IPR011650">
    <property type="entry name" value="Peptidase_M20_dimer"/>
</dbReference>
<dbReference type="InterPro" id="IPR050072">
    <property type="entry name" value="Peptidase_M20A"/>
</dbReference>
<dbReference type="NCBIfam" id="TIGR01892">
    <property type="entry name" value="AcOrn-deacetyl"/>
    <property type="match status" value="1"/>
</dbReference>
<dbReference type="NCBIfam" id="NF003474">
    <property type="entry name" value="PRK05111.1"/>
    <property type="match status" value="1"/>
</dbReference>
<dbReference type="PANTHER" id="PTHR43808">
    <property type="entry name" value="ACETYLORNITHINE DEACETYLASE"/>
    <property type="match status" value="1"/>
</dbReference>
<dbReference type="PANTHER" id="PTHR43808:SF1">
    <property type="entry name" value="ACETYLORNITHINE DEACETYLASE"/>
    <property type="match status" value="1"/>
</dbReference>
<dbReference type="Pfam" id="PF07687">
    <property type="entry name" value="M20_dimer"/>
    <property type="match status" value="1"/>
</dbReference>
<dbReference type="Pfam" id="PF01546">
    <property type="entry name" value="Peptidase_M20"/>
    <property type="match status" value="1"/>
</dbReference>
<dbReference type="SUPFAM" id="SSF55031">
    <property type="entry name" value="Bacterial exopeptidase dimerisation domain"/>
    <property type="match status" value="1"/>
</dbReference>
<dbReference type="SUPFAM" id="SSF53187">
    <property type="entry name" value="Zn-dependent exopeptidases"/>
    <property type="match status" value="1"/>
</dbReference>
<dbReference type="PROSITE" id="PS00758">
    <property type="entry name" value="ARGE_DAPE_CPG2_1"/>
    <property type="match status" value="1"/>
</dbReference>
<dbReference type="PROSITE" id="PS00759">
    <property type="entry name" value="ARGE_DAPE_CPG2_2"/>
    <property type="match status" value="1"/>
</dbReference>
<organism>
    <name type="scientific">Shigella flexneri serotype 5b (strain 8401)</name>
    <dbReference type="NCBI Taxonomy" id="373384"/>
    <lineage>
        <taxon>Bacteria</taxon>
        <taxon>Pseudomonadati</taxon>
        <taxon>Pseudomonadota</taxon>
        <taxon>Gammaproteobacteria</taxon>
        <taxon>Enterobacterales</taxon>
        <taxon>Enterobacteriaceae</taxon>
        <taxon>Shigella</taxon>
    </lineage>
</organism>
<protein>
    <recommendedName>
        <fullName evidence="1">Acetylornithine deacetylase</fullName>
        <shortName evidence="1">AO</shortName>
        <shortName evidence="1">Acetylornithinase</shortName>
        <ecNumber evidence="1">3.5.1.16</ecNumber>
    </recommendedName>
    <alternativeName>
        <fullName evidence="1">N-acetylornithinase</fullName>
        <shortName evidence="1">NAO</shortName>
    </alternativeName>
</protein>
<comment type="function">
    <text evidence="1">Catalyzes the hydrolysis of the amide bond of N(2)-acetylated L-amino acids. Cleaves the acetyl group from N-acetyl-L-ornithine to form L-ornithine, an intermediate in L-arginine biosynthesis pathway, and a branchpoint in the synthesis of polyamines.</text>
</comment>
<comment type="catalytic activity">
    <reaction evidence="1">
        <text>N(2)-acetyl-L-ornithine + H2O = L-ornithine + acetate</text>
        <dbReference type="Rhea" id="RHEA:15941"/>
        <dbReference type="ChEBI" id="CHEBI:15377"/>
        <dbReference type="ChEBI" id="CHEBI:30089"/>
        <dbReference type="ChEBI" id="CHEBI:46911"/>
        <dbReference type="ChEBI" id="CHEBI:57805"/>
        <dbReference type="EC" id="3.5.1.16"/>
    </reaction>
</comment>
<comment type="cofactor">
    <cofactor evidence="1">
        <name>Zn(2+)</name>
        <dbReference type="ChEBI" id="CHEBI:29105"/>
    </cofactor>
    <cofactor evidence="1">
        <name>Co(2+)</name>
        <dbReference type="ChEBI" id="CHEBI:48828"/>
    </cofactor>
    <text evidence="1">Binds 2 Zn(2+) or Co(2+) ions per subunit.</text>
</comment>
<comment type="cofactor">
    <cofactor evidence="1">
        <name>glutathione</name>
        <dbReference type="ChEBI" id="CHEBI:57925"/>
    </cofactor>
</comment>
<comment type="pathway">
    <text evidence="1">Amino-acid biosynthesis; L-arginine biosynthesis; L-ornithine from N(2)-acetyl-L-ornithine (linear): step 1/1.</text>
</comment>
<comment type="subunit">
    <text evidence="1">Homodimer.</text>
</comment>
<comment type="subcellular location">
    <subcellularLocation>
        <location evidence="1">Cytoplasm</location>
    </subcellularLocation>
</comment>
<comment type="similarity">
    <text evidence="1">Belongs to the peptidase M20A family. ArgE subfamily.</text>
</comment>
<evidence type="ECO:0000255" key="1">
    <source>
        <dbReference type="HAMAP-Rule" id="MF_01108"/>
    </source>
</evidence>
<name>ARGE_SHIF8</name>
<proteinExistence type="inferred from homology"/>
<reference key="1">
    <citation type="journal article" date="2006" name="BMC Genomics">
        <title>Complete genome sequence of Shigella flexneri 5b and comparison with Shigella flexneri 2a.</title>
        <authorList>
            <person name="Nie H."/>
            <person name="Yang F."/>
            <person name="Zhang X."/>
            <person name="Yang J."/>
            <person name="Chen L."/>
            <person name="Wang J."/>
            <person name="Xiong Z."/>
            <person name="Peng J."/>
            <person name="Sun L."/>
            <person name="Dong J."/>
            <person name="Xue Y."/>
            <person name="Xu X."/>
            <person name="Chen S."/>
            <person name="Yao Z."/>
            <person name="Shen Y."/>
            <person name="Jin Q."/>
        </authorList>
    </citation>
    <scope>NUCLEOTIDE SEQUENCE [LARGE SCALE GENOMIC DNA]</scope>
    <source>
        <strain>8401</strain>
    </source>
</reference>
<keyword id="KW-0028">Amino-acid biosynthesis</keyword>
<keyword id="KW-0055">Arginine biosynthesis</keyword>
<keyword id="KW-0170">Cobalt</keyword>
<keyword id="KW-0963">Cytoplasm</keyword>
<keyword id="KW-0378">Hydrolase</keyword>
<keyword id="KW-0479">Metal-binding</keyword>
<keyword id="KW-0862">Zinc</keyword>